<proteinExistence type="inferred from homology"/>
<protein>
    <recommendedName>
        <fullName evidence="1">Succinate--CoA ligase [ADP-forming] subunit beta</fullName>
        <ecNumber evidence="1">6.2.1.5</ecNumber>
    </recommendedName>
    <alternativeName>
        <fullName evidence="1">Succinyl-CoA synthetase subunit beta</fullName>
        <shortName evidence="1">SCS-beta</shortName>
    </alternativeName>
</protein>
<reference key="1">
    <citation type="journal article" date="2010" name="Genome Biol. Evol.">
        <title>Continuing evolution of Burkholderia mallei through genome reduction and large-scale rearrangements.</title>
        <authorList>
            <person name="Losada L."/>
            <person name="Ronning C.M."/>
            <person name="DeShazer D."/>
            <person name="Woods D."/>
            <person name="Fedorova N."/>
            <person name="Kim H.S."/>
            <person name="Shabalina S.A."/>
            <person name="Pearson T.R."/>
            <person name="Brinkac L."/>
            <person name="Tan P."/>
            <person name="Nandi T."/>
            <person name="Crabtree J."/>
            <person name="Badger J."/>
            <person name="Beckstrom-Sternberg S."/>
            <person name="Saqib M."/>
            <person name="Schutzer S.E."/>
            <person name="Keim P."/>
            <person name="Nierman W.C."/>
        </authorList>
    </citation>
    <scope>NUCLEOTIDE SEQUENCE [LARGE SCALE GENOMIC DNA]</scope>
    <source>
        <strain>SAVP1</strain>
    </source>
</reference>
<dbReference type="EC" id="6.2.1.5" evidence="1"/>
<dbReference type="EMBL" id="CP000526">
    <property type="protein sequence ID" value="ABM51863.1"/>
    <property type="molecule type" value="Genomic_DNA"/>
</dbReference>
<dbReference type="RefSeq" id="WP_004189251.1">
    <property type="nucleotide sequence ID" value="NC_008785.1"/>
</dbReference>
<dbReference type="SMR" id="A1V6W8"/>
<dbReference type="GeneID" id="92978047"/>
<dbReference type="KEGG" id="bmv:BMASAVP1_A2675"/>
<dbReference type="HOGENOM" id="CLU_037430_0_2_4"/>
<dbReference type="UniPathway" id="UPA00223">
    <property type="reaction ID" value="UER00999"/>
</dbReference>
<dbReference type="GO" id="GO:0005829">
    <property type="term" value="C:cytosol"/>
    <property type="evidence" value="ECO:0007669"/>
    <property type="project" value="TreeGrafter"/>
</dbReference>
<dbReference type="GO" id="GO:0042709">
    <property type="term" value="C:succinate-CoA ligase complex"/>
    <property type="evidence" value="ECO:0007669"/>
    <property type="project" value="TreeGrafter"/>
</dbReference>
<dbReference type="GO" id="GO:0005524">
    <property type="term" value="F:ATP binding"/>
    <property type="evidence" value="ECO:0007669"/>
    <property type="project" value="UniProtKB-UniRule"/>
</dbReference>
<dbReference type="GO" id="GO:0000287">
    <property type="term" value="F:magnesium ion binding"/>
    <property type="evidence" value="ECO:0007669"/>
    <property type="project" value="UniProtKB-UniRule"/>
</dbReference>
<dbReference type="GO" id="GO:0004775">
    <property type="term" value="F:succinate-CoA ligase (ADP-forming) activity"/>
    <property type="evidence" value="ECO:0007669"/>
    <property type="project" value="UniProtKB-UniRule"/>
</dbReference>
<dbReference type="GO" id="GO:0004776">
    <property type="term" value="F:succinate-CoA ligase (GDP-forming) activity"/>
    <property type="evidence" value="ECO:0007669"/>
    <property type="project" value="RHEA"/>
</dbReference>
<dbReference type="GO" id="GO:0006104">
    <property type="term" value="P:succinyl-CoA metabolic process"/>
    <property type="evidence" value="ECO:0007669"/>
    <property type="project" value="TreeGrafter"/>
</dbReference>
<dbReference type="GO" id="GO:0006099">
    <property type="term" value="P:tricarboxylic acid cycle"/>
    <property type="evidence" value="ECO:0007669"/>
    <property type="project" value="UniProtKB-UniRule"/>
</dbReference>
<dbReference type="FunFam" id="3.30.1490.20:FF:000002">
    <property type="entry name" value="Succinate--CoA ligase [ADP-forming] subunit beta"/>
    <property type="match status" value="1"/>
</dbReference>
<dbReference type="FunFam" id="3.30.470.20:FF:000002">
    <property type="entry name" value="Succinate--CoA ligase [ADP-forming] subunit beta"/>
    <property type="match status" value="1"/>
</dbReference>
<dbReference type="FunFam" id="3.40.50.261:FF:000001">
    <property type="entry name" value="Succinate--CoA ligase [ADP-forming] subunit beta"/>
    <property type="match status" value="1"/>
</dbReference>
<dbReference type="Gene3D" id="3.30.1490.20">
    <property type="entry name" value="ATP-grasp fold, A domain"/>
    <property type="match status" value="1"/>
</dbReference>
<dbReference type="Gene3D" id="3.30.470.20">
    <property type="entry name" value="ATP-grasp fold, B domain"/>
    <property type="match status" value="1"/>
</dbReference>
<dbReference type="Gene3D" id="3.40.50.261">
    <property type="entry name" value="Succinyl-CoA synthetase domains"/>
    <property type="match status" value="1"/>
</dbReference>
<dbReference type="HAMAP" id="MF_00558">
    <property type="entry name" value="Succ_CoA_beta"/>
    <property type="match status" value="1"/>
</dbReference>
<dbReference type="InterPro" id="IPR011761">
    <property type="entry name" value="ATP-grasp"/>
</dbReference>
<dbReference type="InterPro" id="IPR013650">
    <property type="entry name" value="ATP-grasp_succ-CoA_synth-type"/>
</dbReference>
<dbReference type="InterPro" id="IPR013815">
    <property type="entry name" value="ATP_grasp_subdomain_1"/>
</dbReference>
<dbReference type="InterPro" id="IPR017866">
    <property type="entry name" value="Succ-CoA_synthase_bsu_CS"/>
</dbReference>
<dbReference type="InterPro" id="IPR005811">
    <property type="entry name" value="SUCC_ACL_C"/>
</dbReference>
<dbReference type="InterPro" id="IPR005809">
    <property type="entry name" value="Succ_CoA_ligase-like_bsu"/>
</dbReference>
<dbReference type="InterPro" id="IPR016102">
    <property type="entry name" value="Succinyl-CoA_synth-like"/>
</dbReference>
<dbReference type="NCBIfam" id="NF001913">
    <property type="entry name" value="PRK00696.1"/>
    <property type="match status" value="1"/>
</dbReference>
<dbReference type="NCBIfam" id="TIGR01016">
    <property type="entry name" value="sucCoAbeta"/>
    <property type="match status" value="1"/>
</dbReference>
<dbReference type="PANTHER" id="PTHR11815:SF10">
    <property type="entry name" value="SUCCINATE--COA LIGASE [GDP-FORMING] SUBUNIT BETA, MITOCHONDRIAL"/>
    <property type="match status" value="1"/>
</dbReference>
<dbReference type="PANTHER" id="PTHR11815">
    <property type="entry name" value="SUCCINYL-COA SYNTHETASE BETA CHAIN"/>
    <property type="match status" value="1"/>
</dbReference>
<dbReference type="Pfam" id="PF08442">
    <property type="entry name" value="ATP-grasp_2"/>
    <property type="match status" value="1"/>
</dbReference>
<dbReference type="Pfam" id="PF00549">
    <property type="entry name" value="Ligase_CoA"/>
    <property type="match status" value="1"/>
</dbReference>
<dbReference type="PIRSF" id="PIRSF001554">
    <property type="entry name" value="SucCS_beta"/>
    <property type="match status" value="1"/>
</dbReference>
<dbReference type="SUPFAM" id="SSF56059">
    <property type="entry name" value="Glutathione synthetase ATP-binding domain-like"/>
    <property type="match status" value="1"/>
</dbReference>
<dbReference type="SUPFAM" id="SSF52210">
    <property type="entry name" value="Succinyl-CoA synthetase domains"/>
    <property type="match status" value="1"/>
</dbReference>
<dbReference type="PROSITE" id="PS50975">
    <property type="entry name" value="ATP_GRASP"/>
    <property type="match status" value="1"/>
</dbReference>
<dbReference type="PROSITE" id="PS01217">
    <property type="entry name" value="SUCCINYL_COA_LIG_3"/>
    <property type="match status" value="1"/>
</dbReference>
<accession>A1V6W8</accession>
<gene>
    <name evidence="1" type="primary">sucC</name>
    <name type="ordered locus">BMASAVP1_A2675</name>
</gene>
<organism>
    <name type="scientific">Burkholderia mallei (strain SAVP1)</name>
    <dbReference type="NCBI Taxonomy" id="320388"/>
    <lineage>
        <taxon>Bacteria</taxon>
        <taxon>Pseudomonadati</taxon>
        <taxon>Pseudomonadota</taxon>
        <taxon>Betaproteobacteria</taxon>
        <taxon>Burkholderiales</taxon>
        <taxon>Burkholderiaceae</taxon>
        <taxon>Burkholderia</taxon>
        <taxon>pseudomallei group</taxon>
    </lineage>
</organism>
<evidence type="ECO:0000255" key="1">
    <source>
        <dbReference type="HAMAP-Rule" id="MF_00558"/>
    </source>
</evidence>
<sequence>MKIHEYQGKEILRKFGVAVPRGKPAFSVDEAVKVAQELGGPVWVVKAQIHAGGRGKGGGVKVAKSLEQVREYSNQILGMQLKTHQTGPEGQKVNRLLIEEGADIKKELYVGIVIDRVSQKVVVMASSEGGMDIEEVAEKTPEAIHKVAVEPSVGLQDAEADDLAKKIGVPDASIPQAREILKGLYKSFWETDASLAEINPLVLTGDGKVIALDAKFNFDSNALFRHPEIVAYRDLDEEDPAEIEASKFDLAYISLDGNIGCLVNGAGLAMATMDTIKLFGGEPANFLDVGGGATTEKVTEAFKLMLKNPGLKAILVNIFGGIMRCDVIAEGVIAGSKAVNLNVPLVVRMKGTNEDLGKKMLAESGLPIISADSMEEAAQKVVAAAAGK</sequence>
<feature type="chain" id="PRO_1000082041" description="Succinate--CoA ligase [ADP-forming] subunit beta">
    <location>
        <begin position="1"/>
        <end position="388"/>
    </location>
</feature>
<feature type="domain" description="ATP-grasp" evidence="1">
    <location>
        <begin position="9"/>
        <end position="244"/>
    </location>
</feature>
<feature type="binding site" evidence="1">
    <location>
        <position position="46"/>
    </location>
    <ligand>
        <name>ATP</name>
        <dbReference type="ChEBI" id="CHEBI:30616"/>
    </ligand>
</feature>
<feature type="binding site" evidence="1">
    <location>
        <begin position="53"/>
        <end position="55"/>
    </location>
    <ligand>
        <name>ATP</name>
        <dbReference type="ChEBI" id="CHEBI:30616"/>
    </ligand>
</feature>
<feature type="binding site" evidence="1">
    <location>
        <position position="99"/>
    </location>
    <ligand>
        <name>ATP</name>
        <dbReference type="ChEBI" id="CHEBI:30616"/>
    </ligand>
</feature>
<feature type="binding site" evidence="1">
    <location>
        <position position="102"/>
    </location>
    <ligand>
        <name>ATP</name>
        <dbReference type="ChEBI" id="CHEBI:30616"/>
    </ligand>
</feature>
<feature type="binding site" evidence="1">
    <location>
        <position position="107"/>
    </location>
    <ligand>
        <name>ATP</name>
        <dbReference type="ChEBI" id="CHEBI:30616"/>
    </ligand>
</feature>
<feature type="binding site" evidence="1">
    <location>
        <position position="199"/>
    </location>
    <ligand>
        <name>Mg(2+)</name>
        <dbReference type="ChEBI" id="CHEBI:18420"/>
    </ligand>
</feature>
<feature type="binding site" evidence="1">
    <location>
        <position position="213"/>
    </location>
    <ligand>
        <name>Mg(2+)</name>
        <dbReference type="ChEBI" id="CHEBI:18420"/>
    </ligand>
</feature>
<feature type="binding site" evidence="1">
    <location>
        <position position="264"/>
    </location>
    <ligand>
        <name>substrate</name>
        <note>ligand shared with subunit alpha</note>
    </ligand>
</feature>
<feature type="binding site" evidence="1">
    <location>
        <begin position="321"/>
        <end position="323"/>
    </location>
    <ligand>
        <name>substrate</name>
        <note>ligand shared with subunit alpha</note>
    </ligand>
</feature>
<comment type="function">
    <text evidence="1">Succinyl-CoA synthetase functions in the citric acid cycle (TCA), coupling the hydrolysis of succinyl-CoA to the synthesis of either ATP or GTP and thus represents the only step of substrate-level phosphorylation in the TCA. The beta subunit provides nucleotide specificity of the enzyme and binds the substrate succinate, while the binding sites for coenzyme A and phosphate are found in the alpha subunit.</text>
</comment>
<comment type="catalytic activity">
    <reaction evidence="1">
        <text>succinate + ATP + CoA = succinyl-CoA + ADP + phosphate</text>
        <dbReference type="Rhea" id="RHEA:17661"/>
        <dbReference type="ChEBI" id="CHEBI:30031"/>
        <dbReference type="ChEBI" id="CHEBI:30616"/>
        <dbReference type="ChEBI" id="CHEBI:43474"/>
        <dbReference type="ChEBI" id="CHEBI:57287"/>
        <dbReference type="ChEBI" id="CHEBI:57292"/>
        <dbReference type="ChEBI" id="CHEBI:456216"/>
        <dbReference type="EC" id="6.2.1.5"/>
    </reaction>
    <physiologicalReaction direction="right-to-left" evidence="1">
        <dbReference type="Rhea" id="RHEA:17663"/>
    </physiologicalReaction>
</comment>
<comment type="catalytic activity">
    <reaction evidence="1">
        <text>GTP + succinate + CoA = succinyl-CoA + GDP + phosphate</text>
        <dbReference type="Rhea" id="RHEA:22120"/>
        <dbReference type="ChEBI" id="CHEBI:30031"/>
        <dbReference type="ChEBI" id="CHEBI:37565"/>
        <dbReference type="ChEBI" id="CHEBI:43474"/>
        <dbReference type="ChEBI" id="CHEBI:57287"/>
        <dbReference type="ChEBI" id="CHEBI:57292"/>
        <dbReference type="ChEBI" id="CHEBI:58189"/>
    </reaction>
    <physiologicalReaction direction="right-to-left" evidence="1">
        <dbReference type="Rhea" id="RHEA:22122"/>
    </physiologicalReaction>
</comment>
<comment type="cofactor">
    <cofactor evidence="1">
        <name>Mg(2+)</name>
        <dbReference type="ChEBI" id="CHEBI:18420"/>
    </cofactor>
    <text evidence="1">Binds 1 Mg(2+) ion per subunit.</text>
</comment>
<comment type="pathway">
    <text evidence="1">Carbohydrate metabolism; tricarboxylic acid cycle; succinate from succinyl-CoA (ligase route): step 1/1.</text>
</comment>
<comment type="subunit">
    <text evidence="1">Heterotetramer of two alpha and two beta subunits.</text>
</comment>
<comment type="similarity">
    <text evidence="1">Belongs to the succinate/malate CoA ligase beta subunit family.</text>
</comment>
<name>SUCC_BURMS</name>
<keyword id="KW-0067">ATP-binding</keyword>
<keyword id="KW-0436">Ligase</keyword>
<keyword id="KW-0460">Magnesium</keyword>
<keyword id="KW-0479">Metal-binding</keyword>
<keyword id="KW-0547">Nucleotide-binding</keyword>
<keyword id="KW-0816">Tricarboxylic acid cycle</keyword>